<feature type="chain" id="PRO_1000132229" description="Probable transcriptional regulatory protein PMI1113">
    <location>
        <begin position="1"/>
        <end position="251"/>
    </location>
</feature>
<protein>
    <recommendedName>
        <fullName evidence="1">Probable transcriptional regulatory protein PMI1113</fullName>
    </recommendedName>
</protein>
<comment type="subcellular location">
    <subcellularLocation>
        <location evidence="1">Cytoplasm</location>
    </subcellularLocation>
</comment>
<comment type="similarity">
    <text evidence="1">Belongs to the TACO1 family.</text>
</comment>
<name>Y1113_PROMH</name>
<dbReference type="EMBL" id="AM942759">
    <property type="protein sequence ID" value="CAR42403.1"/>
    <property type="molecule type" value="Genomic_DNA"/>
</dbReference>
<dbReference type="RefSeq" id="WP_004242729.1">
    <property type="nucleotide sequence ID" value="NC_010554.1"/>
</dbReference>
<dbReference type="SMR" id="B4ETP5"/>
<dbReference type="EnsemblBacteria" id="CAR42403">
    <property type="protein sequence ID" value="CAR42403"/>
    <property type="gene ID" value="PMI1113"/>
</dbReference>
<dbReference type="GeneID" id="6801344"/>
<dbReference type="KEGG" id="pmr:PMI1113"/>
<dbReference type="eggNOG" id="COG0217">
    <property type="taxonomic scope" value="Bacteria"/>
</dbReference>
<dbReference type="HOGENOM" id="CLU_062974_2_2_6"/>
<dbReference type="Proteomes" id="UP000008319">
    <property type="component" value="Chromosome"/>
</dbReference>
<dbReference type="GO" id="GO:0005829">
    <property type="term" value="C:cytosol"/>
    <property type="evidence" value="ECO:0007669"/>
    <property type="project" value="TreeGrafter"/>
</dbReference>
<dbReference type="GO" id="GO:0003677">
    <property type="term" value="F:DNA binding"/>
    <property type="evidence" value="ECO:0007669"/>
    <property type="project" value="UniProtKB-UniRule"/>
</dbReference>
<dbReference type="GO" id="GO:0006355">
    <property type="term" value="P:regulation of DNA-templated transcription"/>
    <property type="evidence" value="ECO:0007669"/>
    <property type="project" value="UniProtKB-UniRule"/>
</dbReference>
<dbReference type="FunFam" id="1.10.10.200:FF:000001">
    <property type="entry name" value="Probable transcriptional regulatory protein YebC"/>
    <property type="match status" value="1"/>
</dbReference>
<dbReference type="FunFam" id="3.30.70.980:FF:000002">
    <property type="entry name" value="Probable transcriptional regulatory protein YebC"/>
    <property type="match status" value="1"/>
</dbReference>
<dbReference type="Gene3D" id="1.10.10.200">
    <property type="match status" value="1"/>
</dbReference>
<dbReference type="Gene3D" id="3.30.70.980">
    <property type="match status" value="2"/>
</dbReference>
<dbReference type="HAMAP" id="MF_00693">
    <property type="entry name" value="Transcrip_reg_TACO1"/>
    <property type="match status" value="1"/>
</dbReference>
<dbReference type="InterPro" id="IPR017856">
    <property type="entry name" value="Integrase-like_N"/>
</dbReference>
<dbReference type="InterPro" id="IPR048300">
    <property type="entry name" value="TACO1_YebC-like_2nd/3rd_dom"/>
</dbReference>
<dbReference type="InterPro" id="IPR049083">
    <property type="entry name" value="TACO1_YebC_N"/>
</dbReference>
<dbReference type="InterPro" id="IPR002876">
    <property type="entry name" value="Transcrip_reg_TACO1-like"/>
</dbReference>
<dbReference type="InterPro" id="IPR026564">
    <property type="entry name" value="Transcrip_reg_TACO1-like_dom3"/>
</dbReference>
<dbReference type="InterPro" id="IPR029072">
    <property type="entry name" value="YebC-like"/>
</dbReference>
<dbReference type="NCBIfam" id="NF001030">
    <property type="entry name" value="PRK00110.1"/>
    <property type="match status" value="1"/>
</dbReference>
<dbReference type="NCBIfam" id="NF009044">
    <property type="entry name" value="PRK12378.1"/>
    <property type="match status" value="1"/>
</dbReference>
<dbReference type="NCBIfam" id="TIGR01033">
    <property type="entry name" value="YebC/PmpR family DNA-binding transcriptional regulator"/>
    <property type="match status" value="1"/>
</dbReference>
<dbReference type="PANTHER" id="PTHR12532:SF6">
    <property type="entry name" value="TRANSCRIPTIONAL REGULATORY PROTEIN YEBC-RELATED"/>
    <property type="match status" value="1"/>
</dbReference>
<dbReference type="PANTHER" id="PTHR12532">
    <property type="entry name" value="TRANSLATIONAL ACTIVATOR OF CYTOCHROME C OXIDASE 1"/>
    <property type="match status" value="1"/>
</dbReference>
<dbReference type="Pfam" id="PF20772">
    <property type="entry name" value="TACO1_YebC_N"/>
    <property type="match status" value="1"/>
</dbReference>
<dbReference type="Pfam" id="PF01709">
    <property type="entry name" value="Transcrip_reg"/>
    <property type="match status" value="1"/>
</dbReference>
<dbReference type="SUPFAM" id="SSF75625">
    <property type="entry name" value="YebC-like"/>
    <property type="match status" value="1"/>
</dbReference>
<sequence>MAGHSKWANTKHRKAAQDAKRGKIFTKIIRELVTAARLGGGDPATNPRLRAAVDKALSNNMTRDTLNRAIARGAGNDENDNMETIIYEGYGPGGTAVMVECLSDNRNRTVSDVRHAFTKTGGNLGTDGSVSYLFTKKGVISYAPGVDEDAVMEAALEAGAEDVETYDDGAIDVYTTPEAFGEVKDAMDAAGFVAESAEVSMIPSTKAELDIDTAPKLMRLIDMLEDSDDVQEVYHNGDISDEVAKQLEDIL</sequence>
<evidence type="ECO:0000255" key="1">
    <source>
        <dbReference type="HAMAP-Rule" id="MF_00693"/>
    </source>
</evidence>
<organism>
    <name type="scientific">Proteus mirabilis (strain HI4320)</name>
    <dbReference type="NCBI Taxonomy" id="529507"/>
    <lineage>
        <taxon>Bacteria</taxon>
        <taxon>Pseudomonadati</taxon>
        <taxon>Pseudomonadota</taxon>
        <taxon>Gammaproteobacteria</taxon>
        <taxon>Enterobacterales</taxon>
        <taxon>Morganellaceae</taxon>
        <taxon>Proteus</taxon>
    </lineage>
</organism>
<gene>
    <name type="ordered locus">PMI1113</name>
</gene>
<proteinExistence type="inferred from homology"/>
<reference key="1">
    <citation type="journal article" date="2008" name="J. Bacteriol.">
        <title>Complete genome sequence of uropathogenic Proteus mirabilis, a master of both adherence and motility.</title>
        <authorList>
            <person name="Pearson M.M."/>
            <person name="Sebaihia M."/>
            <person name="Churcher C."/>
            <person name="Quail M.A."/>
            <person name="Seshasayee A.S."/>
            <person name="Luscombe N.M."/>
            <person name="Abdellah Z."/>
            <person name="Arrosmith C."/>
            <person name="Atkin B."/>
            <person name="Chillingworth T."/>
            <person name="Hauser H."/>
            <person name="Jagels K."/>
            <person name="Moule S."/>
            <person name="Mungall K."/>
            <person name="Norbertczak H."/>
            <person name="Rabbinowitsch E."/>
            <person name="Walker D."/>
            <person name="Whithead S."/>
            <person name="Thomson N.R."/>
            <person name="Rather P.N."/>
            <person name="Parkhill J."/>
            <person name="Mobley H.L.T."/>
        </authorList>
    </citation>
    <scope>NUCLEOTIDE SEQUENCE [LARGE SCALE GENOMIC DNA]</scope>
    <source>
        <strain>HI4320</strain>
    </source>
</reference>
<keyword id="KW-0963">Cytoplasm</keyword>
<keyword id="KW-0238">DNA-binding</keyword>
<keyword id="KW-1185">Reference proteome</keyword>
<keyword id="KW-0804">Transcription</keyword>
<keyword id="KW-0805">Transcription regulation</keyword>
<accession>B4ETP5</accession>